<accession>Q5JDM5</accession>
<dbReference type="EMBL" id="AP006878">
    <property type="protein sequence ID" value="BAD84806.1"/>
    <property type="molecule type" value="Genomic_DNA"/>
</dbReference>
<dbReference type="RefSeq" id="WP_011249568.1">
    <property type="nucleotide sequence ID" value="NC_006624.1"/>
</dbReference>
<dbReference type="SMR" id="Q5JDM5"/>
<dbReference type="STRING" id="69014.TK0617"/>
<dbReference type="EnsemblBacteria" id="BAD84806">
    <property type="protein sequence ID" value="BAD84806"/>
    <property type="gene ID" value="TK0617"/>
</dbReference>
<dbReference type="GeneID" id="78447132"/>
<dbReference type="KEGG" id="tko:TK0617"/>
<dbReference type="PATRIC" id="fig|69014.16.peg.598"/>
<dbReference type="eggNOG" id="arCOG03247">
    <property type="taxonomic scope" value="Archaea"/>
</dbReference>
<dbReference type="HOGENOM" id="CLU_107897_0_0_2"/>
<dbReference type="InParanoid" id="Q5JDM5"/>
<dbReference type="OrthoDB" id="117530at2157"/>
<dbReference type="PhylomeDB" id="Q5JDM5"/>
<dbReference type="Proteomes" id="UP000000536">
    <property type="component" value="Chromosome"/>
</dbReference>
<dbReference type="GO" id="GO:0019843">
    <property type="term" value="F:rRNA binding"/>
    <property type="evidence" value="ECO:0007669"/>
    <property type="project" value="InterPro"/>
</dbReference>
<dbReference type="GO" id="GO:0006364">
    <property type="term" value="P:rRNA processing"/>
    <property type="evidence" value="ECO:0007669"/>
    <property type="project" value="InterPro"/>
</dbReference>
<dbReference type="Gene3D" id="3.40.50.10480">
    <property type="entry name" value="Probable brix-domain ribosomal biogenesis protein"/>
    <property type="match status" value="1"/>
</dbReference>
<dbReference type="HAMAP" id="MF_00699">
    <property type="entry name" value="BriX"/>
    <property type="match status" value="1"/>
</dbReference>
<dbReference type="InterPro" id="IPR007109">
    <property type="entry name" value="Brix"/>
</dbReference>
<dbReference type="InterPro" id="IPR023548">
    <property type="entry name" value="Brix_dom_Rbsml_bgen_prot"/>
</dbReference>
<dbReference type="NCBIfam" id="NF003053">
    <property type="entry name" value="PRK03972.1"/>
    <property type="match status" value="1"/>
</dbReference>
<dbReference type="SMART" id="SM00879">
    <property type="entry name" value="Brix"/>
    <property type="match status" value="1"/>
</dbReference>
<dbReference type="SUPFAM" id="SSF52954">
    <property type="entry name" value="Class II aaRS ABD-related"/>
    <property type="match status" value="1"/>
</dbReference>
<dbReference type="PROSITE" id="PS50833">
    <property type="entry name" value="BRIX"/>
    <property type="match status" value="1"/>
</dbReference>
<sequence>MMLITTSHRPTRRTRSFGHDLEKVFPNSLYLTRGKKTIQDLLMEAYDRGYERLLIINVWKGNPLKMTFIKVDPEDWGYIGYLYLHGIKLQREIGFRNIPPIREEMPFVVTTAKRVGIDHTAFAQVFAELTGGKFVPRGNKSLQTIADKNNTDVIGVIENYPRGMAVNFYRFDITRERPVGPLILVKIWIMEDGRRWDYKEALGIKPKE</sequence>
<keyword id="KW-1185">Reference proteome</keyword>
<keyword id="KW-0690">Ribosome biogenesis</keyword>
<feature type="chain" id="PRO_0000120279" description="Probable Brix domain-containing ribosomal biogenesis protein">
    <location>
        <begin position="1"/>
        <end position="208"/>
    </location>
</feature>
<feature type="domain" description="Brix" evidence="1">
    <location>
        <begin position="1"/>
        <end position="196"/>
    </location>
</feature>
<reference key="1">
    <citation type="journal article" date="2005" name="Genome Res.">
        <title>Complete genome sequence of the hyperthermophilic archaeon Thermococcus kodakaraensis KOD1 and comparison with Pyrococcus genomes.</title>
        <authorList>
            <person name="Fukui T."/>
            <person name="Atomi H."/>
            <person name="Kanai T."/>
            <person name="Matsumi R."/>
            <person name="Fujiwara S."/>
            <person name="Imanaka T."/>
        </authorList>
    </citation>
    <scope>NUCLEOTIDE SEQUENCE [LARGE SCALE GENOMIC DNA]</scope>
    <source>
        <strain>ATCC BAA-918 / JCM 12380 / KOD1</strain>
    </source>
</reference>
<name>BRIX_THEKO</name>
<proteinExistence type="inferred from homology"/>
<protein>
    <recommendedName>
        <fullName evidence="1">Probable Brix domain-containing ribosomal biogenesis protein</fullName>
    </recommendedName>
</protein>
<organism>
    <name type="scientific">Thermococcus kodakarensis (strain ATCC BAA-918 / JCM 12380 / KOD1)</name>
    <name type="common">Pyrococcus kodakaraensis (strain KOD1)</name>
    <dbReference type="NCBI Taxonomy" id="69014"/>
    <lineage>
        <taxon>Archaea</taxon>
        <taxon>Methanobacteriati</taxon>
        <taxon>Methanobacteriota</taxon>
        <taxon>Thermococci</taxon>
        <taxon>Thermococcales</taxon>
        <taxon>Thermococcaceae</taxon>
        <taxon>Thermococcus</taxon>
    </lineage>
</organism>
<gene>
    <name type="ordered locus">TK0617</name>
</gene>
<comment type="function">
    <text evidence="1">Probably involved in the biogenesis of the ribosome.</text>
</comment>
<evidence type="ECO:0000255" key="1">
    <source>
        <dbReference type="HAMAP-Rule" id="MF_00699"/>
    </source>
</evidence>